<evidence type="ECO:0000250" key="1">
    <source>
        <dbReference type="UniProtKB" id="Q46FL2"/>
    </source>
</evidence>
<sequence length="352" mass="39470">MIFHPRPSPIAAAMYQLRDLGVDAIILHGPSGCCFRTARLLELDGVRVFTSNIDENAIVFGASENLKKALDYAIEYLKKELKKERPMIGIVGTCASMIIGEDLWEFVDDDRAIIIPVEVHSGSGDNTIGAIKAMESALKLGIIDEKEFERQKFLLKKATEVEKKRGMAKKEYIKPTYDDDLNEAIKVLKDLKEKDGKIACVLNAKKETAYLFAHPLIVLNKYFNCVNIANLDINKGLPKIRRDAQNILRRFKADYITGGLDEYPITGERAVEILKDLDVDAIVVSGVPHALPIEEIDKDIIKIGISDGPRTYHPIKEIYDYAIVELDAHAKVLGKRDIVKSRFGEILDYALE</sequence>
<organism>
    <name type="scientific">Methanocaldococcus jannaschii (strain ATCC 43067 / DSM 2661 / JAL-1 / JCM 10045 / NBRC 100440)</name>
    <name type="common">Methanococcus jannaschii</name>
    <dbReference type="NCBI Taxonomy" id="243232"/>
    <lineage>
        <taxon>Archaea</taxon>
        <taxon>Methanobacteriati</taxon>
        <taxon>Methanobacteriota</taxon>
        <taxon>Methanomada group</taxon>
        <taxon>Methanococci</taxon>
        <taxon>Methanococcales</taxon>
        <taxon>Methanocaldococcaceae</taxon>
        <taxon>Methanocaldococcus</taxon>
    </lineage>
</organism>
<accession>Q58818</accession>
<name>CFBD_METJA</name>
<protein>
    <recommendedName>
        <fullName evidence="1">Ni-sirohydrochlorin a,c-diamide reductive cyclase complex, component CfbD</fullName>
        <ecNumber evidence="1">6.3.3.7</ecNumber>
    </recommendedName>
    <alternativeName>
        <fullName evidence="1">NifD homolog component CfbD</fullName>
    </alternativeName>
</protein>
<comment type="function">
    <text evidence="1">Involved in the biosynthesis of the unique nickel-containing tetrapyrrole coenzyme F430, the prosthetic group of methyl-coenzyme M reductase (MCR), which plays a key role in methanogenesis and anaerobic methane oxidation. Catalyzes both the six-electron reduction of the tetrahydroporphyrin ring system and the gamma-lactamization of the c-acetamide side chain of Ni-sirohydrochlorin a,c-diamide to yield 15,17(3)-seco-F430-17(3)-acid (seco-F430), the last intermediate in the biosynthesis of the coenzyme F430.</text>
</comment>
<comment type="catalytic activity">
    <reaction evidence="1">
        <text>Ni-sirohydrochlorin a,c-diamide + 3 AH2 + ATP + H2O = 15,17(3)-seco-F430-17(3)-acid + 3 A + ADP + phosphate</text>
        <dbReference type="Rhea" id="RHEA:52900"/>
        <dbReference type="ChEBI" id="CHEBI:13193"/>
        <dbReference type="ChEBI" id="CHEBI:15377"/>
        <dbReference type="ChEBI" id="CHEBI:17499"/>
        <dbReference type="ChEBI" id="CHEBI:30616"/>
        <dbReference type="ChEBI" id="CHEBI:43474"/>
        <dbReference type="ChEBI" id="CHEBI:136887"/>
        <dbReference type="ChEBI" id="CHEBI:136888"/>
        <dbReference type="ChEBI" id="CHEBI:456216"/>
        <dbReference type="EC" id="6.3.3.7"/>
    </reaction>
</comment>
<comment type="cofactor">
    <cofactor evidence="1">
        <name>[4Fe-4S] cluster</name>
        <dbReference type="ChEBI" id="CHEBI:49883"/>
    </cofactor>
</comment>
<comment type="subunit">
    <text evidence="1">Homodimer or monomer. The Ni-sirohydrochlorin a,c-diamide reductive cyclase complex is composed of a NifH homolog component CfbC and a NifD homolog component CfbD.</text>
</comment>
<comment type="similarity">
    <text evidence="1">Belongs to the NifD/NifK/NifE/NifN family.</text>
</comment>
<reference key="1">
    <citation type="journal article" date="1996" name="Science">
        <title>Complete genome sequence of the methanogenic archaeon, Methanococcus jannaschii.</title>
        <authorList>
            <person name="Bult C.J."/>
            <person name="White O."/>
            <person name="Olsen G.J."/>
            <person name="Zhou L."/>
            <person name="Fleischmann R.D."/>
            <person name="Sutton G.G."/>
            <person name="Blake J.A."/>
            <person name="FitzGerald L.M."/>
            <person name="Clayton R.A."/>
            <person name="Gocayne J.D."/>
            <person name="Kerlavage A.R."/>
            <person name="Dougherty B.A."/>
            <person name="Tomb J.-F."/>
            <person name="Adams M.D."/>
            <person name="Reich C.I."/>
            <person name="Overbeek R."/>
            <person name="Kirkness E.F."/>
            <person name="Weinstock K.G."/>
            <person name="Merrick J.M."/>
            <person name="Glodek A."/>
            <person name="Scott J.L."/>
            <person name="Geoghagen N.S.M."/>
            <person name="Weidman J.F."/>
            <person name="Fuhrmann J.L."/>
            <person name="Nguyen D."/>
            <person name="Utterback T.R."/>
            <person name="Kelley J.M."/>
            <person name="Peterson J.D."/>
            <person name="Sadow P.W."/>
            <person name="Hanna M.C."/>
            <person name="Cotton M.D."/>
            <person name="Roberts K.M."/>
            <person name="Hurst M.A."/>
            <person name="Kaine B.P."/>
            <person name="Borodovsky M."/>
            <person name="Klenk H.-P."/>
            <person name="Fraser C.M."/>
            <person name="Smith H.O."/>
            <person name="Woese C.R."/>
            <person name="Venter J.C."/>
        </authorList>
    </citation>
    <scope>NUCLEOTIDE SEQUENCE [LARGE SCALE GENOMIC DNA]</scope>
    <source>
        <strain>ATCC 43067 / DSM 2661 / JAL-1 / JCM 10045 / NBRC 100440</strain>
    </source>
</reference>
<keyword id="KW-0067">ATP-binding</keyword>
<keyword id="KW-0408">Iron</keyword>
<keyword id="KW-0411">Iron-sulfur</keyword>
<keyword id="KW-0436">Ligase</keyword>
<keyword id="KW-0479">Metal-binding</keyword>
<keyword id="KW-0484">Methanogenesis</keyword>
<keyword id="KW-0547">Nucleotide-binding</keyword>
<keyword id="KW-1185">Reference proteome</keyword>
<feature type="chain" id="PRO_0000107317" description="Ni-sirohydrochlorin a,c-diamide reductive cyclase complex, component CfbD">
    <location>
        <begin position="1"/>
        <end position="352"/>
    </location>
</feature>
<proteinExistence type="inferred from homology"/>
<gene>
    <name evidence="1" type="primary">cfbD</name>
    <name type="ordered locus">MJ1423</name>
</gene>
<dbReference type="EC" id="6.3.3.7" evidence="1"/>
<dbReference type="EMBL" id="L77117">
    <property type="protein sequence ID" value="AAB99434.1"/>
    <property type="molecule type" value="Genomic_DNA"/>
</dbReference>
<dbReference type="PIR" id="F64477">
    <property type="entry name" value="F64477"/>
</dbReference>
<dbReference type="RefSeq" id="WP_010870941.1">
    <property type="nucleotide sequence ID" value="NC_000909.1"/>
</dbReference>
<dbReference type="SMR" id="Q58818"/>
<dbReference type="FunCoup" id="Q58818">
    <property type="interactions" value="111"/>
</dbReference>
<dbReference type="STRING" id="243232.MJ_1423"/>
<dbReference type="PaxDb" id="243232-MJ_1423"/>
<dbReference type="DNASU" id="1452327"/>
<dbReference type="EnsemblBacteria" id="AAB99434">
    <property type="protein sequence ID" value="AAB99434"/>
    <property type="gene ID" value="MJ_1423"/>
</dbReference>
<dbReference type="GeneID" id="1452327"/>
<dbReference type="KEGG" id="mja:MJ_1423"/>
<dbReference type="eggNOG" id="arCOG04888">
    <property type="taxonomic scope" value="Archaea"/>
</dbReference>
<dbReference type="HOGENOM" id="CLU_782144_0_0_2"/>
<dbReference type="InParanoid" id="Q58818"/>
<dbReference type="OrthoDB" id="53142at2157"/>
<dbReference type="PhylomeDB" id="Q58818"/>
<dbReference type="Proteomes" id="UP000000805">
    <property type="component" value="Chromosome"/>
</dbReference>
<dbReference type="GO" id="GO:0005524">
    <property type="term" value="F:ATP binding"/>
    <property type="evidence" value="ECO:0007669"/>
    <property type="project" value="UniProtKB-KW"/>
</dbReference>
<dbReference type="GO" id="GO:0051536">
    <property type="term" value="F:iron-sulfur cluster binding"/>
    <property type="evidence" value="ECO:0007669"/>
    <property type="project" value="UniProtKB-KW"/>
</dbReference>
<dbReference type="GO" id="GO:0016874">
    <property type="term" value="F:ligase activity"/>
    <property type="evidence" value="ECO:0007669"/>
    <property type="project" value="UniProtKB-KW"/>
</dbReference>
<dbReference type="GO" id="GO:0046872">
    <property type="term" value="F:metal ion binding"/>
    <property type="evidence" value="ECO:0007669"/>
    <property type="project" value="UniProtKB-KW"/>
</dbReference>
<dbReference type="GO" id="GO:0016491">
    <property type="term" value="F:oxidoreductase activity"/>
    <property type="evidence" value="ECO:0007669"/>
    <property type="project" value="InterPro"/>
</dbReference>
<dbReference type="GO" id="GO:0015948">
    <property type="term" value="P:methanogenesis"/>
    <property type="evidence" value="ECO:0007669"/>
    <property type="project" value="UniProtKB-KW"/>
</dbReference>
<dbReference type="Gene3D" id="3.40.50.1980">
    <property type="entry name" value="Nitrogenase molybdenum iron protein domain"/>
    <property type="match status" value="1"/>
</dbReference>
<dbReference type="InterPro" id="IPR017675">
    <property type="entry name" value="CfbD"/>
</dbReference>
<dbReference type="InterPro" id="IPR000510">
    <property type="entry name" value="Nase/OxRdtase_comp1"/>
</dbReference>
<dbReference type="InterPro" id="IPR052673">
    <property type="entry name" value="Ni-siroh_cyclase_CfbD"/>
</dbReference>
<dbReference type="NCBIfam" id="TIGR03282">
    <property type="entry name" value="methan_mark_13"/>
    <property type="match status" value="1"/>
</dbReference>
<dbReference type="PANTHER" id="PTHR42846">
    <property type="entry name" value="NI-SIROHYDROCHLORIN A,C-DIAMIDE REDUCTIVE CYCLASE COMPLEX, COMPONENT CFBD"/>
    <property type="match status" value="1"/>
</dbReference>
<dbReference type="PANTHER" id="PTHR42846:SF1">
    <property type="entry name" value="NI-SIROHYDROCHLORIN A,C-DIAMIDE REDUCTIVE CYCLASE COMPLEX, COMPONENT CFBD"/>
    <property type="match status" value="1"/>
</dbReference>
<dbReference type="Pfam" id="PF00148">
    <property type="entry name" value="Oxidored_nitro"/>
    <property type="match status" value="1"/>
</dbReference>
<dbReference type="SUPFAM" id="SSF53807">
    <property type="entry name" value="Helical backbone' metal receptor"/>
    <property type="match status" value="1"/>
</dbReference>